<protein>
    <recommendedName>
        <fullName evidence="1">Leucine--tRNA ligase</fullName>
        <ecNumber evidence="1">6.1.1.4</ecNumber>
    </recommendedName>
    <alternativeName>
        <fullName evidence="1">Leucyl-tRNA synthetase</fullName>
        <shortName evidence="1">LeuRS</shortName>
    </alternativeName>
</protein>
<accession>A1S8S8</accession>
<name>SYL_SHEAM</name>
<organism>
    <name type="scientific">Shewanella amazonensis (strain ATCC BAA-1098 / SB2B)</name>
    <dbReference type="NCBI Taxonomy" id="326297"/>
    <lineage>
        <taxon>Bacteria</taxon>
        <taxon>Pseudomonadati</taxon>
        <taxon>Pseudomonadota</taxon>
        <taxon>Gammaproteobacteria</taxon>
        <taxon>Alteromonadales</taxon>
        <taxon>Shewanellaceae</taxon>
        <taxon>Shewanella</taxon>
    </lineage>
</organism>
<gene>
    <name evidence="1" type="primary">leuS</name>
    <name type="ordered locus">Sama_2582</name>
</gene>
<reference key="1">
    <citation type="submission" date="2006-12" db="EMBL/GenBank/DDBJ databases">
        <title>Complete sequence of Shewanella amazonensis SB2B.</title>
        <authorList>
            <consortium name="US DOE Joint Genome Institute"/>
            <person name="Copeland A."/>
            <person name="Lucas S."/>
            <person name="Lapidus A."/>
            <person name="Barry K."/>
            <person name="Detter J.C."/>
            <person name="Glavina del Rio T."/>
            <person name="Hammon N."/>
            <person name="Israni S."/>
            <person name="Dalin E."/>
            <person name="Tice H."/>
            <person name="Pitluck S."/>
            <person name="Munk A.C."/>
            <person name="Brettin T."/>
            <person name="Bruce D."/>
            <person name="Han C."/>
            <person name="Tapia R."/>
            <person name="Gilna P."/>
            <person name="Schmutz J."/>
            <person name="Larimer F."/>
            <person name="Land M."/>
            <person name="Hauser L."/>
            <person name="Kyrpides N."/>
            <person name="Mikhailova N."/>
            <person name="Fredrickson J."/>
            <person name="Richardson P."/>
        </authorList>
    </citation>
    <scope>NUCLEOTIDE SEQUENCE [LARGE SCALE GENOMIC DNA]</scope>
    <source>
        <strain>ATCC BAA-1098 / SB2B</strain>
    </source>
</reference>
<sequence length="859" mass="96507">MQEQYIHSEIEAEVQKYWADNKTFEVTEDPAKEKFYCLSMFPYPSGRLHMGHVRNYTIGDVVARFQRLQGKNVLQPIGWDAFGLPAENAAIKNATAPAPWTYENIDYMKNQLKMLGFGYDWSREIATCTPEYYRWEQWFFTKLYEKGLVYKKTSAVNWCPNDQTVLANEQVQDGCCWRCDTPVEQKEIPQWFIKITAYAEELLNDIDNLEGWPEQVKTMQRNWIGRSEGVEMTFKVKDSDDSFDIYTTRPDTVMGVTYVAIAAGHPLAEKAALNNPELAAFVEECKQSGTSEAELATMEKKGVATGLYAIHPLTGEEVPVWAANFVLMNYGTGAVMSVPAHDQRDYEFAKKYGLALKAVIKPADGEVDISEAAYTEKGVLFNSAEFDGLDFDGAFNAIADKLAAEGKGKRQVNFRLRDWGVSRQRYWGAPIPMVTLEDGTVMPTPEDQLPVILPEDVVMDGVQSPIKADKEWAKTQVNGQDALRETDTFDTFMESSWYYARYCSPKANEMLDPAKANYWLPVDQYIGGIEHACMHLLYFRFFHKLLRDAGLVNSNEPAKRLLTQGMVLADAFYYNNEKGARVWVSPLDVTVVEKDDKGRILKAVDTEGHELVYTGMSKMSKSKNNGIDPQVMVEKYGADTVRLFMMFASPPELTLEWQESGVEGAHRFIKRLWKLASEYSAAPATEALDVSALNADQKTLRRELHKTIAKVTDDLGRRQMFNTAVAAVMELMNHLQKAPLASAQDKALMNEALSAVVRLLYPIAPHVCFNLWRELGNSGAIEDAGWPATDESALVEDSKLIVVQVNGKVRAKLTVAADATKEQVEALGLAEDAVRKYTDGVTVRKVIYVPGKLLNIVAN</sequence>
<keyword id="KW-0030">Aminoacyl-tRNA synthetase</keyword>
<keyword id="KW-0067">ATP-binding</keyword>
<keyword id="KW-0963">Cytoplasm</keyword>
<keyword id="KW-0436">Ligase</keyword>
<keyword id="KW-0547">Nucleotide-binding</keyword>
<keyword id="KW-0648">Protein biosynthesis</keyword>
<keyword id="KW-1185">Reference proteome</keyword>
<feature type="chain" id="PRO_0000334812" description="Leucine--tRNA ligase">
    <location>
        <begin position="1"/>
        <end position="859"/>
    </location>
</feature>
<feature type="short sequence motif" description="'HIGH' region">
    <location>
        <begin position="42"/>
        <end position="52"/>
    </location>
</feature>
<feature type="short sequence motif" description="'KMSKS' region">
    <location>
        <begin position="618"/>
        <end position="622"/>
    </location>
</feature>
<feature type="binding site" evidence="1">
    <location>
        <position position="621"/>
    </location>
    <ligand>
        <name>ATP</name>
        <dbReference type="ChEBI" id="CHEBI:30616"/>
    </ligand>
</feature>
<dbReference type="EC" id="6.1.1.4" evidence="1"/>
<dbReference type="EMBL" id="CP000507">
    <property type="protein sequence ID" value="ABM00785.1"/>
    <property type="status" value="ALT_INIT"/>
    <property type="molecule type" value="Genomic_DNA"/>
</dbReference>
<dbReference type="RefSeq" id="WP_041409865.1">
    <property type="nucleotide sequence ID" value="NC_008700.1"/>
</dbReference>
<dbReference type="SMR" id="A1S8S8"/>
<dbReference type="STRING" id="326297.Sama_2582"/>
<dbReference type="KEGG" id="saz:Sama_2582"/>
<dbReference type="eggNOG" id="COG0495">
    <property type="taxonomic scope" value="Bacteria"/>
</dbReference>
<dbReference type="HOGENOM" id="CLU_004427_0_0_6"/>
<dbReference type="OrthoDB" id="9810365at2"/>
<dbReference type="Proteomes" id="UP000009175">
    <property type="component" value="Chromosome"/>
</dbReference>
<dbReference type="GO" id="GO:0005829">
    <property type="term" value="C:cytosol"/>
    <property type="evidence" value="ECO:0007669"/>
    <property type="project" value="TreeGrafter"/>
</dbReference>
<dbReference type="GO" id="GO:0002161">
    <property type="term" value="F:aminoacyl-tRNA deacylase activity"/>
    <property type="evidence" value="ECO:0007669"/>
    <property type="project" value="InterPro"/>
</dbReference>
<dbReference type="GO" id="GO:0005524">
    <property type="term" value="F:ATP binding"/>
    <property type="evidence" value="ECO:0007669"/>
    <property type="project" value="UniProtKB-UniRule"/>
</dbReference>
<dbReference type="GO" id="GO:0004823">
    <property type="term" value="F:leucine-tRNA ligase activity"/>
    <property type="evidence" value="ECO:0007669"/>
    <property type="project" value="UniProtKB-UniRule"/>
</dbReference>
<dbReference type="GO" id="GO:0006429">
    <property type="term" value="P:leucyl-tRNA aminoacylation"/>
    <property type="evidence" value="ECO:0007669"/>
    <property type="project" value="UniProtKB-UniRule"/>
</dbReference>
<dbReference type="CDD" id="cd07958">
    <property type="entry name" value="Anticodon_Ia_Leu_BEm"/>
    <property type="match status" value="1"/>
</dbReference>
<dbReference type="CDD" id="cd00812">
    <property type="entry name" value="LeuRS_core"/>
    <property type="match status" value="1"/>
</dbReference>
<dbReference type="FunFam" id="1.10.730.10:FF:000003">
    <property type="entry name" value="Leucine--tRNA ligase"/>
    <property type="match status" value="1"/>
</dbReference>
<dbReference type="FunFam" id="2.20.28.290:FF:000001">
    <property type="entry name" value="Leucine--tRNA ligase"/>
    <property type="match status" value="1"/>
</dbReference>
<dbReference type="FunFam" id="3.10.20.590:FF:000001">
    <property type="entry name" value="Leucine--tRNA ligase"/>
    <property type="match status" value="1"/>
</dbReference>
<dbReference type="FunFam" id="3.40.50.620:FF:000003">
    <property type="entry name" value="Leucine--tRNA ligase"/>
    <property type="match status" value="1"/>
</dbReference>
<dbReference type="FunFam" id="3.40.50.620:FF:000124">
    <property type="entry name" value="Leucine--tRNA ligase"/>
    <property type="match status" value="1"/>
</dbReference>
<dbReference type="FunFam" id="3.90.740.10:FF:000012">
    <property type="entry name" value="Leucine--tRNA ligase"/>
    <property type="match status" value="1"/>
</dbReference>
<dbReference type="Gene3D" id="2.20.28.290">
    <property type="match status" value="1"/>
</dbReference>
<dbReference type="Gene3D" id="3.10.20.590">
    <property type="match status" value="1"/>
</dbReference>
<dbReference type="Gene3D" id="3.40.50.620">
    <property type="entry name" value="HUPs"/>
    <property type="match status" value="2"/>
</dbReference>
<dbReference type="Gene3D" id="1.10.730.10">
    <property type="entry name" value="Isoleucyl-tRNA Synthetase, Domain 1"/>
    <property type="match status" value="1"/>
</dbReference>
<dbReference type="HAMAP" id="MF_00049_B">
    <property type="entry name" value="Leu_tRNA_synth_B"/>
    <property type="match status" value="1"/>
</dbReference>
<dbReference type="InterPro" id="IPR001412">
    <property type="entry name" value="aa-tRNA-synth_I_CS"/>
</dbReference>
<dbReference type="InterPro" id="IPR002300">
    <property type="entry name" value="aa-tRNA-synth_Ia"/>
</dbReference>
<dbReference type="InterPro" id="IPR002302">
    <property type="entry name" value="Leu-tRNA-ligase"/>
</dbReference>
<dbReference type="InterPro" id="IPR025709">
    <property type="entry name" value="Leu_tRNA-synth_edit"/>
</dbReference>
<dbReference type="InterPro" id="IPR013155">
    <property type="entry name" value="M/V/L/I-tRNA-synth_anticd-bd"/>
</dbReference>
<dbReference type="InterPro" id="IPR015413">
    <property type="entry name" value="Methionyl/Leucyl_tRNA_Synth"/>
</dbReference>
<dbReference type="InterPro" id="IPR014729">
    <property type="entry name" value="Rossmann-like_a/b/a_fold"/>
</dbReference>
<dbReference type="InterPro" id="IPR009080">
    <property type="entry name" value="tRNAsynth_Ia_anticodon-bd"/>
</dbReference>
<dbReference type="InterPro" id="IPR009008">
    <property type="entry name" value="Val/Leu/Ile-tRNA-synth_edit"/>
</dbReference>
<dbReference type="NCBIfam" id="TIGR00396">
    <property type="entry name" value="leuS_bact"/>
    <property type="match status" value="1"/>
</dbReference>
<dbReference type="PANTHER" id="PTHR43740:SF2">
    <property type="entry name" value="LEUCINE--TRNA LIGASE, MITOCHONDRIAL"/>
    <property type="match status" value="1"/>
</dbReference>
<dbReference type="PANTHER" id="PTHR43740">
    <property type="entry name" value="LEUCYL-TRNA SYNTHETASE"/>
    <property type="match status" value="1"/>
</dbReference>
<dbReference type="Pfam" id="PF08264">
    <property type="entry name" value="Anticodon_1"/>
    <property type="match status" value="1"/>
</dbReference>
<dbReference type="Pfam" id="PF00133">
    <property type="entry name" value="tRNA-synt_1"/>
    <property type="match status" value="2"/>
</dbReference>
<dbReference type="Pfam" id="PF13603">
    <property type="entry name" value="tRNA-synt_1_2"/>
    <property type="match status" value="1"/>
</dbReference>
<dbReference type="Pfam" id="PF09334">
    <property type="entry name" value="tRNA-synt_1g"/>
    <property type="match status" value="1"/>
</dbReference>
<dbReference type="PRINTS" id="PR00985">
    <property type="entry name" value="TRNASYNTHLEU"/>
</dbReference>
<dbReference type="SUPFAM" id="SSF47323">
    <property type="entry name" value="Anticodon-binding domain of a subclass of class I aminoacyl-tRNA synthetases"/>
    <property type="match status" value="1"/>
</dbReference>
<dbReference type="SUPFAM" id="SSF52374">
    <property type="entry name" value="Nucleotidylyl transferase"/>
    <property type="match status" value="1"/>
</dbReference>
<dbReference type="SUPFAM" id="SSF50677">
    <property type="entry name" value="ValRS/IleRS/LeuRS editing domain"/>
    <property type="match status" value="1"/>
</dbReference>
<dbReference type="PROSITE" id="PS00178">
    <property type="entry name" value="AA_TRNA_LIGASE_I"/>
    <property type="match status" value="1"/>
</dbReference>
<evidence type="ECO:0000255" key="1">
    <source>
        <dbReference type="HAMAP-Rule" id="MF_00049"/>
    </source>
</evidence>
<evidence type="ECO:0000305" key="2"/>
<proteinExistence type="inferred from homology"/>
<comment type="catalytic activity">
    <reaction evidence="1">
        <text>tRNA(Leu) + L-leucine + ATP = L-leucyl-tRNA(Leu) + AMP + diphosphate</text>
        <dbReference type="Rhea" id="RHEA:11688"/>
        <dbReference type="Rhea" id="RHEA-COMP:9613"/>
        <dbReference type="Rhea" id="RHEA-COMP:9622"/>
        <dbReference type="ChEBI" id="CHEBI:30616"/>
        <dbReference type="ChEBI" id="CHEBI:33019"/>
        <dbReference type="ChEBI" id="CHEBI:57427"/>
        <dbReference type="ChEBI" id="CHEBI:78442"/>
        <dbReference type="ChEBI" id="CHEBI:78494"/>
        <dbReference type="ChEBI" id="CHEBI:456215"/>
        <dbReference type="EC" id="6.1.1.4"/>
    </reaction>
</comment>
<comment type="subcellular location">
    <subcellularLocation>
        <location evidence="1">Cytoplasm</location>
    </subcellularLocation>
</comment>
<comment type="similarity">
    <text evidence="1">Belongs to the class-I aminoacyl-tRNA synthetase family.</text>
</comment>
<comment type="sequence caution" evidence="2">
    <conflict type="erroneous initiation">
        <sequence resource="EMBL-CDS" id="ABM00785"/>
    </conflict>
</comment>